<organism>
    <name type="scientific">Synechococcus sp. (strain CC9902)</name>
    <dbReference type="NCBI Taxonomy" id="316279"/>
    <lineage>
        <taxon>Bacteria</taxon>
        <taxon>Bacillati</taxon>
        <taxon>Cyanobacteriota</taxon>
        <taxon>Cyanophyceae</taxon>
        <taxon>Synechococcales</taxon>
        <taxon>Synechococcaceae</taxon>
        <taxon>Synechococcus</taxon>
    </lineage>
</organism>
<sequence length="430" mass="46804">MTQLQSLRGMVDLLPQALQRWQAVESVARTHFQRSGFGEIRTPVMEPTDLFCRGIGEATDVVGKEMYTFNDRGDRSCTLRPEGTASVVRAALQHGLLSQGPQKLWYAGPMFRYERPQAGRQRQFHQIGVEWLGAASARADVEVIALAWDLLASLGVGGLELELNSLGSTDDRCAYRTALVAWLEQRSNLLDEDSRARLNTNPLRILDSKNKATQALLDGAPTLANSLAPESRERFEVVQQGLASLGIPFRLSPRLVRGLDYYCHTAFEITSDQLGAQATVCGGGRYNGLIGQLGGPDTPAVGWALGMERLLLVVEAAANADPDGDSARLTAVVPPNAYLVNRGEQAEKAALILARSLRCAGLVIELDNSGASFSKQFKRADRCGARWALVLGDEEVEKGEVRIKPLSDESDDFFLGLHDLTGLLAKLTAM</sequence>
<reference key="1">
    <citation type="submission" date="2005-08" db="EMBL/GenBank/DDBJ databases">
        <title>Complete sequence of Synechococcus sp. CC9902.</title>
        <authorList>
            <person name="Copeland A."/>
            <person name="Lucas S."/>
            <person name="Lapidus A."/>
            <person name="Barry K."/>
            <person name="Detter J.C."/>
            <person name="Glavina T."/>
            <person name="Hammon N."/>
            <person name="Israni S."/>
            <person name="Pitluck S."/>
            <person name="Martinez M."/>
            <person name="Schmutz J."/>
            <person name="Larimer F."/>
            <person name="Land M."/>
            <person name="Kyrpides N."/>
            <person name="Ivanova N."/>
            <person name="Richardson P."/>
        </authorList>
    </citation>
    <scope>NUCLEOTIDE SEQUENCE [LARGE SCALE GENOMIC DNA]</scope>
    <source>
        <strain>CC9902</strain>
    </source>
</reference>
<gene>
    <name evidence="1" type="primary">hisS</name>
    <name type="ordered locus">Syncc9902_0220</name>
</gene>
<comment type="catalytic activity">
    <reaction evidence="1">
        <text>tRNA(His) + L-histidine + ATP = L-histidyl-tRNA(His) + AMP + diphosphate + H(+)</text>
        <dbReference type="Rhea" id="RHEA:17313"/>
        <dbReference type="Rhea" id="RHEA-COMP:9665"/>
        <dbReference type="Rhea" id="RHEA-COMP:9689"/>
        <dbReference type="ChEBI" id="CHEBI:15378"/>
        <dbReference type="ChEBI" id="CHEBI:30616"/>
        <dbReference type="ChEBI" id="CHEBI:33019"/>
        <dbReference type="ChEBI" id="CHEBI:57595"/>
        <dbReference type="ChEBI" id="CHEBI:78442"/>
        <dbReference type="ChEBI" id="CHEBI:78527"/>
        <dbReference type="ChEBI" id="CHEBI:456215"/>
        <dbReference type="EC" id="6.1.1.21"/>
    </reaction>
</comment>
<comment type="subunit">
    <text evidence="1">Homodimer.</text>
</comment>
<comment type="subcellular location">
    <subcellularLocation>
        <location evidence="1">Cytoplasm</location>
    </subcellularLocation>
</comment>
<comment type="similarity">
    <text evidence="1">Belongs to the class-II aminoacyl-tRNA synthetase family.</text>
</comment>
<name>SYH_SYNS9</name>
<dbReference type="EC" id="6.1.1.21" evidence="1"/>
<dbReference type="EMBL" id="CP000097">
    <property type="protein sequence ID" value="ABB25195.1"/>
    <property type="molecule type" value="Genomic_DNA"/>
</dbReference>
<dbReference type="RefSeq" id="WP_011359058.1">
    <property type="nucleotide sequence ID" value="NC_007513.1"/>
</dbReference>
<dbReference type="SMR" id="Q3B0D3"/>
<dbReference type="STRING" id="316279.Syncc9902_0220"/>
<dbReference type="KEGG" id="sye:Syncc9902_0220"/>
<dbReference type="eggNOG" id="COG0124">
    <property type="taxonomic scope" value="Bacteria"/>
</dbReference>
<dbReference type="HOGENOM" id="CLU_025113_1_0_3"/>
<dbReference type="OrthoDB" id="9800814at2"/>
<dbReference type="Proteomes" id="UP000002712">
    <property type="component" value="Chromosome"/>
</dbReference>
<dbReference type="GO" id="GO:0005737">
    <property type="term" value="C:cytoplasm"/>
    <property type="evidence" value="ECO:0007669"/>
    <property type="project" value="UniProtKB-SubCell"/>
</dbReference>
<dbReference type="GO" id="GO:0005524">
    <property type="term" value="F:ATP binding"/>
    <property type="evidence" value="ECO:0007669"/>
    <property type="project" value="UniProtKB-UniRule"/>
</dbReference>
<dbReference type="GO" id="GO:0004821">
    <property type="term" value="F:histidine-tRNA ligase activity"/>
    <property type="evidence" value="ECO:0007669"/>
    <property type="project" value="UniProtKB-UniRule"/>
</dbReference>
<dbReference type="GO" id="GO:0006427">
    <property type="term" value="P:histidyl-tRNA aminoacylation"/>
    <property type="evidence" value="ECO:0007669"/>
    <property type="project" value="UniProtKB-UniRule"/>
</dbReference>
<dbReference type="CDD" id="cd00773">
    <property type="entry name" value="HisRS-like_core"/>
    <property type="match status" value="1"/>
</dbReference>
<dbReference type="CDD" id="cd00859">
    <property type="entry name" value="HisRS_anticodon"/>
    <property type="match status" value="1"/>
</dbReference>
<dbReference type="Gene3D" id="3.40.50.800">
    <property type="entry name" value="Anticodon-binding domain"/>
    <property type="match status" value="1"/>
</dbReference>
<dbReference type="Gene3D" id="3.30.930.10">
    <property type="entry name" value="Bira Bifunctional Protein, Domain 2"/>
    <property type="match status" value="1"/>
</dbReference>
<dbReference type="HAMAP" id="MF_00127">
    <property type="entry name" value="His_tRNA_synth"/>
    <property type="match status" value="1"/>
</dbReference>
<dbReference type="InterPro" id="IPR006195">
    <property type="entry name" value="aa-tRNA-synth_II"/>
</dbReference>
<dbReference type="InterPro" id="IPR045864">
    <property type="entry name" value="aa-tRNA-synth_II/BPL/LPL"/>
</dbReference>
<dbReference type="InterPro" id="IPR004154">
    <property type="entry name" value="Anticodon-bd"/>
</dbReference>
<dbReference type="InterPro" id="IPR036621">
    <property type="entry name" value="Anticodon-bd_dom_sf"/>
</dbReference>
<dbReference type="InterPro" id="IPR015807">
    <property type="entry name" value="His-tRNA-ligase"/>
</dbReference>
<dbReference type="InterPro" id="IPR041715">
    <property type="entry name" value="HisRS-like_core"/>
</dbReference>
<dbReference type="InterPro" id="IPR004516">
    <property type="entry name" value="HisRS/HisZ"/>
</dbReference>
<dbReference type="InterPro" id="IPR033656">
    <property type="entry name" value="HisRS_anticodon"/>
</dbReference>
<dbReference type="NCBIfam" id="TIGR00442">
    <property type="entry name" value="hisS"/>
    <property type="match status" value="1"/>
</dbReference>
<dbReference type="PANTHER" id="PTHR43707:SF1">
    <property type="entry name" value="HISTIDINE--TRNA LIGASE, MITOCHONDRIAL-RELATED"/>
    <property type="match status" value="1"/>
</dbReference>
<dbReference type="PANTHER" id="PTHR43707">
    <property type="entry name" value="HISTIDYL-TRNA SYNTHETASE"/>
    <property type="match status" value="1"/>
</dbReference>
<dbReference type="Pfam" id="PF03129">
    <property type="entry name" value="HGTP_anticodon"/>
    <property type="match status" value="1"/>
</dbReference>
<dbReference type="Pfam" id="PF13393">
    <property type="entry name" value="tRNA-synt_His"/>
    <property type="match status" value="1"/>
</dbReference>
<dbReference type="PIRSF" id="PIRSF001549">
    <property type="entry name" value="His-tRNA_synth"/>
    <property type="match status" value="1"/>
</dbReference>
<dbReference type="SUPFAM" id="SSF52954">
    <property type="entry name" value="Class II aaRS ABD-related"/>
    <property type="match status" value="1"/>
</dbReference>
<dbReference type="SUPFAM" id="SSF55681">
    <property type="entry name" value="Class II aaRS and biotin synthetases"/>
    <property type="match status" value="1"/>
</dbReference>
<dbReference type="PROSITE" id="PS50862">
    <property type="entry name" value="AA_TRNA_LIGASE_II"/>
    <property type="match status" value="1"/>
</dbReference>
<protein>
    <recommendedName>
        <fullName evidence="1">Histidine--tRNA ligase</fullName>
        <ecNumber evidence="1">6.1.1.21</ecNumber>
    </recommendedName>
    <alternativeName>
        <fullName evidence="1">Histidyl-tRNA synthetase</fullName>
        <shortName evidence="1">HisRS</shortName>
    </alternativeName>
</protein>
<proteinExistence type="inferred from homology"/>
<keyword id="KW-0030">Aminoacyl-tRNA synthetase</keyword>
<keyword id="KW-0067">ATP-binding</keyword>
<keyword id="KW-0963">Cytoplasm</keyword>
<keyword id="KW-0436">Ligase</keyword>
<keyword id="KW-0547">Nucleotide-binding</keyword>
<keyword id="KW-0648">Protein biosynthesis</keyword>
<keyword id="KW-1185">Reference proteome</keyword>
<evidence type="ECO:0000255" key="1">
    <source>
        <dbReference type="HAMAP-Rule" id="MF_00127"/>
    </source>
</evidence>
<feature type="chain" id="PRO_1000016475" description="Histidine--tRNA ligase">
    <location>
        <begin position="1"/>
        <end position="430"/>
    </location>
</feature>
<accession>Q3B0D3</accession>